<accession>Q5HLX5</accession>
<sequence length="162" mass="17556">MTNFTHINKQGNAKMVDVSNKEITKRVAEAHSSIIVNEKIYSQITQNTNSKGNVLNTAQIAGIMAAKNTSTIIPMCHPLPLTGIDISFKWDSNNDDSYRLNITAVVSTTGKTGVEMEALTAASVTALTIYDMTKAIDKGMIIGETYLESKSGGKSGDFHRKN</sequence>
<name>MOAC_STAEQ</name>
<dbReference type="EC" id="4.6.1.17" evidence="1"/>
<dbReference type="EMBL" id="CP000029">
    <property type="protein sequence ID" value="AAW55216.1"/>
    <property type="molecule type" value="Genomic_DNA"/>
</dbReference>
<dbReference type="RefSeq" id="WP_002438509.1">
    <property type="nucleotide sequence ID" value="NC_002976.3"/>
</dbReference>
<dbReference type="SMR" id="Q5HLX5"/>
<dbReference type="STRING" id="176279.SERP1856"/>
<dbReference type="GeneID" id="50018049"/>
<dbReference type="KEGG" id="ser:SERP1856"/>
<dbReference type="eggNOG" id="COG0315">
    <property type="taxonomic scope" value="Bacteria"/>
</dbReference>
<dbReference type="HOGENOM" id="CLU_074693_1_1_9"/>
<dbReference type="UniPathway" id="UPA00344"/>
<dbReference type="Proteomes" id="UP000000531">
    <property type="component" value="Chromosome"/>
</dbReference>
<dbReference type="GO" id="GO:0061799">
    <property type="term" value="F:cyclic pyranopterin monophosphate synthase activity"/>
    <property type="evidence" value="ECO:0007669"/>
    <property type="project" value="UniProtKB-UniRule"/>
</dbReference>
<dbReference type="GO" id="GO:0006777">
    <property type="term" value="P:Mo-molybdopterin cofactor biosynthetic process"/>
    <property type="evidence" value="ECO:0007669"/>
    <property type="project" value="UniProtKB-UniRule"/>
</dbReference>
<dbReference type="CDD" id="cd01420">
    <property type="entry name" value="MoaC_PE"/>
    <property type="match status" value="1"/>
</dbReference>
<dbReference type="Gene3D" id="3.30.70.640">
    <property type="entry name" value="Molybdopterin cofactor biosynthesis C (MoaC) domain"/>
    <property type="match status" value="1"/>
</dbReference>
<dbReference type="HAMAP" id="MF_01224_B">
    <property type="entry name" value="MoaC_B"/>
    <property type="match status" value="1"/>
</dbReference>
<dbReference type="InterPro" id="IPR023045">
    <property type="entry name" value="MoaC"/>
</dbReference>
<dbReference type="InterPro" id="IPR047594">
    <property type="entry name" value="MoaC_bact/euk"/>
</dbReference>
<dbReference type="InterPro" id="IPR036522">
    <property type="entry name" value="MoaC_sf"/>
</dbReference>
<dbReference type="InterPro" id="IPR050105">
    <property type="entry name" value="MoCo_biosynth_MoaA/MoaC"/>
</dbReference>
<dbReference type="InterPro" id="IPR002820">
    <property type="entry name" value="Mopterin_CF_biosynth-C_dom"/>
</dbReference>
<dbReference type="NCBIfam" id="TIGR00581">
    <property type="entry name" value="moaC"/>
    <property type="match status" value="1"/>
</dbReference>
<dbReference type="NCBIfam" id="NF006870">
    <property type="entry name" value="PRK09364.1"/>
    <property type="match status" value="1"/>
</dbReference>
<dbReference type="PANTHER" id="PTHR22960">
    <property type="entry name" value="MOLYBDOPTERIN COFACTOR SYNTHESIS PROTEIN A"/>
    <property type="match status" value="1"/>
</dbReference>
<dbReference type="Pfam" id="PF01967">
    <property type="entry name" value="MoaC"/>
    <property type="match status" value="1"/>
</dbReference>
<dbReference type="SUPFAM" id="SSF55040">
    <property type="entry name" value="Molybdenum cofactor biosynthesis protein C, MoaC"/>
    <property type="match status" value="1"/>
</dbReference>
<organism>
    <name type="scientific">Staphylococcus epidermidis (strain ATCC 35984 / DSM 28319 / BCRC 17069 / CCUG 31568 / BM 3577 / RP62A)</name>
    <dbReference type="NCBI Taxonomy" id="176279"/>
    <lineage>
        <taxon>Bacteria</taxon>
        <taxon>Bacillati</taxon>
        <taxon>Bacillota</taxon>
        <taxon>Bacilli</taxon>
        <taxon>Bacillales</taxon>
        <taxon>Staphylococcaceae</taxon>
        <taxon>Staphylococcus</taxon>
    </lineage>
</organism>
<gene>
    <name evidence="1" type="primary">moaC</name>
    <name type="ordered locus">SERP1856</name>
</gene>
<reference key="1">
    <citation type="journal article" date="2005" name="J. Bacteriol.">
        <title>Insights on evolution of virulence and resistance from the complete genome analysis of an early methicillin-resistant Staphylococcus aureus strain and a biofilm-producing methicillin-resistant Staphylococcus epidermidis strain.</title>
        <authorList>
            <person name="Gill S.R."/>
            <person name="Fouts D.E."/>
            <person name="Archer G.L."/>
            <person name="Mongodin E.F."/>
            <person name="DeBoy R.T."/>
            <person name="Ravel J."/>
            <person name="Paulsen I.T."/>
            <person name="Kolonay J.F."/>
            <person name="Brinkac L.M."/>
            <person name="Beanan M.J."/>
            <person name="Dodson R.J."/>
            <person name="Daugherty S.C."/>
            <person name="Madupu R."/>
            <person name="Angiuoli S.V."/>
            <person name="Durkin A.S."/>
            <person name="Haft D.H."/>
            <person name="Vamathevan J.J."/>
            <person name="Khouri H."/>
            <person name="Utterback T.R."/>
            <person name="Lee C."/>
            <person name="Dimitrov G."/>
            <person name="Jiang L."/>
            <person name="Qin H."/>
            <person name="Weidman J."/>
            <person name="Tran K."/>
            <person name="Kang K.H."/>
            <person name="Hance I.R."/>
            <person name="Nelson K.E."/>
            <person name="Fraser C.M."/>
        </authorList>
    </citation>
    <scope>NUCLEOTIDE SEQUENCE [LARGE SCALE GENOMIC DNA]</scope>
    <source>
        <strain>ATCC 35984 / DSM 28319 / BCRC 17069 / CCUG 31568 / BM 3577 / RP62A</strain>
    </source>
</reference>
<comment type="function">
    <text evidence="1">Catalyzes the conversion of (8S)-3',8-cyclo-7,8-dihydroguanosine 5'-triphosphate to cyclic pyranopterin monophosphate (cPMP).</text>
</comment>
<comment type="catalytic activity">
    <reaction evidence="1">
        <text>(8S)-3',8-cyclo-7,8-dihydroguanosine 5'-triphosphate = cyclic pyranopterin phosphate + diphosphate</text>
        <dbReference type="Rhea" id="RHEA:49580"/>
        <dbReference type="ChEBI" id="CHEBI:33019"/>
        <dbReference type="ChEBI" id="CHEBI:59648"/>
        <dbReference type="ChEBI" id="CHEBI:131766"/>
        <dbReference type="EC" id="4.6.1.17"/>
    </reaction>
</comment>
<comment type="pathway">
    <text evidence="1">Cofactor biosynthesis; molybdopterin biosynthesis.</text>
</comment>
<comment type="subunit">
    <text evidence="1">Homohexamer; trimer of dimers.</text>
</comment>
<comment type="similarity">
    <text evidence="1">Belongs to the MoaC family.</text>
</comment>
<evidence type="ECO:0000255" key="1">
    <source>
        <dbReference type="HAMAP-Rule" id="MF_01224"/>
    </source>
</evidence>
<protein>
    <recommendedName>
        <fullName evidence="1">Cyclic pyranopterin monophosphate synthase</fullName>
        <ecNumber evidence="1">4.6.1.17</ecNumber>
    </recommendedName>
    <alternativeName>
        <fullName evidence="1">Molybdenum cofactor biosynthesis protein C</fullName>
    </alternativeName>
</protein>
<keyword id="KW-0456">Lyase</keyword>
<keyword id="KW-0501">Molybdenum cofactor biosynthesis</keyword>
<keyword id="KW-1185">Reference proteome</keyword>
<feature type="chain" id="PRO_0000097836" description="Cyclic pyranopterin monophosphate synthase">
    <location>
        <begin position="1"/>
        <end position="162"/>
    </location>
</feature>
<feature type="active site" evidence="1">
    <location>
        <position position="131"/>
    </location>
</feature>
<feature type="binding site" evidence="1">
    <location>
        <begin position="75"/>
        <end position="77"/>
    </location>
    <ligand>
        <name>substrate</name>
    </ligand>
</feature>
<feature type="binding site" evidence="1">
    <location>
        <begin position="116"/>
        <end position="117"/>
    </location>
    <ligand>
        <name>substrate</name>
    </ligand>
</feature>
<proteinExistence type="inferred from homology"/>